<dbReference type="EMBL" id="AAFI02000019">
    <property type="protein sequence ID" value="EAL68747.1"/>
    <property type="molecule type" value="Genomic_DNA"/>
</dbReference>
<dbReference type="RefSeq" id="XP_642673.1">
    <property type="nucleotide sequence ID" value="XM_637581.1"/>
</dbReference>
<dbReference type="SMR" id="Q75J93"/>
<dbReference type="FunCoup" id="Q75J93">
    <property type="interactions" value="19"/>
</dbReference>
<dbReference type="STRING" id="44689.Q75J93"/>
<dbReference type="PaxDb" id="44689-DDB0229980"/>
<dbReference type="EnsemblProtists" id="EAL68747">
    <property type="protein sequence ID" value="EAL68747"/>
    <property type="gene ID" value="DDB_G0277381"/>
</dbReference>
<dbReference type="GeneID" id="8621003"/>
<dbReference type="KEGG" id="ddi:DDB_G0277381"/>
<dbReference type="dictyBase" id="DDB_G0277381">
    <property type="gene designation" value="cpras1"/>
</dbReference>
<dbReference type="VEuPathDB" id="AmoebaDB:DDB_G0277381"/>
<dbReference type="eggNOG" id="KOG0395">
    <property type="taxonomic scope" value="Eukaryota"/>
</dbReference>
<dbReference type="HOGENOM" id="CLU_329360_0_0_1"/>
<dbReference type="InParanoid" id="Q75J93"/>
<dbReference type="OMA" id="FQVQIKY"/>
<dbReference type="PhylomeDB" id="Q75J93"/>
<dbReference type="PRO" id="PR:Q75J93"/>
<dbReference type="Proteomes" id="UP000002195">
    <property type="component" value="Chromosome 2"/>
</dbReference>
<dbReference type="GO" id="GO:0030127">
    <property type="term" value="C:COPII vesicle coat"/>
    <property type="evidence" value="ECO:0007669"/>
    <property type="project" value="InterPro"/>
</dbReference>
<dbReference type="GO" id="GO:0005886">
    <property type="term" value="C:plasma membrane"/>
    <property type="evidence" value="ECO:0000318"/>
    <property type="project" value="GO_Central"/>
</dbReference>
<dbReference type="GO" id="GO:0019003">
    <property type="term" value="F:GDP binding"/>
    <property type="evidence" value="ECO:0000318"/>
    <property type="project" value="GO_Central"/>
</dbReference>
<dbReference type="GO" id="GO:0005525">
    <property type="term" value="F:GTP binding"/>
    <property type="evidence" value="ECO:0000318"/>
    <property type="project" value="GO_Central"/>
</dbReference>
<dbReference type="GO" id="GO:0003924">
    <property type="term" value="F:GTPase activity"/>
    <property type="evidence" value="ECO:0000318"/>
    <property type="project" value="GO_Central"/>
</dbReference>
<dbReference type="GO" id="GO:0008270">
    <property type="term" value="F:zinc ion binding"/>
    <property type="evidence" value="ECO:0007669"/>
    <property type="project" value="InterPro"/>
</dbReference>
<dbReference type="GO" id="GO:0006888">
    <property type="term" value="P:endoplasmic reticulum to Golgi vesicle-mediated transport"/>
    <property type="evidence" value="ECO:0007669"/>
    <property type="project" value="InterPro"/>
</dbReference>
<dbReference type="GO" id="GO:0006886">
    <property type="term" value="P:intracellular protein transport"/>
    <property type="evidence" value="ECO:0007669"/>
    <property type="project" value="InterPro"/>
</dbReference>
<dbReference type="GO" id="GO:0007165">
    <property type="term" value="P:signal transduction"/>
    <property type="evidence" value="ECO:0007669"/>
    <property type="project" value="InterPro"/>
</dbReference>
<dbReference type="FunFam" id="3.40.50.300:FF:003775">
    <property type="entry name" value="Circularly permutated Ras protein 1"/>
    <property type="match status" value="1"/>
</dbReference>
<dbReference type="Gene3D" id="3.40.50.300">
    <property type="entry name" value="P-loop containing nucleotide triphosphate hydrolases"/>
    <property type="match status" value="2"/>
</dbReference>
<dbReference type="Gene3D" id="3.40.50.410">
    <property type="entry name" value="von Willebrand factor, type A domain"/>
    <property type="match status" value="1"/>
</dbReference>
<dbReference type="InterPro" id="IPR027417">
    <property type="entry name" value="P-loop_NTPase"/>
</dbReference>
<dbReference type="InterPro" id="IPR005225">
    <property type="entry name" value="Small_GTP-bd"/>
</dbReference>
<dbReference type="InterPro" id="IPR001806">
    <property type="entry name" value="Small_GTPase"/>
</dbReference>
<dbReference type="InterPro" id="IPR020849">
    <property type="entry name" value="Small_GTPase_Ras-type"/>
</dbReference>
<dbReference type="InterPro" id="IPR002035">
    <property type="entry name" value="VWF_A"/>
</dbReference>
<dbReference type="InterPro" id="IPR036465">
    <property type="entry name" value="vWFA_dom_sf"/>
</dbReference>
<dbReference type="InterPro" id="IPR036174">
    <property type="entry name" value="Znf_Sec23_Sec24_sf"/>
</dbReference>
<dbReference type="NCBIfam" id="TIGR00231">
    <property type="entry name" value="small_GTP"/>
    <property type="match status" value="1"/>
</dbReference>
<dbReference type="PANTHER" id="PTHR24070">
    <property type="entry name" value="RAS, DI-RAS, AND RHEB FAMILY MEMBERS OF SMALL GTPASE SUPERFAMILY"/>
    <property type="match status" value="1"/>
</dbReference>
<dbReference type="Pfam" id="PF00071">
    <property type="entry name" value="Ras"/>
    <property type="match status" value="2"/>
</dbReference>
<dbReference type="PRINTS" id="PR00449">
    <property type="entry name" value="RASTRNSFRMNG"/>
</dbReference>
<dbReference type="SMART" id="SM00175">
    <property type="entry name" value="RAB"/>
    <property type="match status" value="1"/>
</dbReference>
<dbReference type="SMART" id="SM00176">
    <property type="entry name" value="RAN"/>
    <property type="match status" value="1"/>
</dbReference>
<dbReference type="SMART" id="SM00173">
    <property type="entry name" value="RAS"/>
    <property type="match status" value="2"/>
</dbReference>
<dbReference type="SMART" id="SM00174">
    <property type="entry name" value="RHO"/>
    <property type="match status" value="1"/>
</dbReference>
<dbReference type="SMART" id="SM00327">
    <property type="entry name" value="VWA"/>
    <property type="match status" value="1"/>
</dbReference>
<dbReference type="SUPFAM" id="SSF52540">
    <property type="entry name" value="P-loop containing nucleoside triphosphate hydrolases"/>
    <property type="match status" value="2"/>
</dbReference>
<dbReference type="SUPFAM" id="SSF53300">
    <property type="entry name" value="vWA-like"/>
    <property type="match status" value="1"/>
</dbReference>
<dbReference type="SUPFAM" id="SSF82919">
    <property type="entry name" value="Zn-finger domain of Sec23/24"/>
    <property type="match status" value="1"/>
</dbReference>
<dbReference type="PROSITE" id="PS51421">
    <property type="entry name" value="RAS"/>
    <property type="match status" value="1"/>
</dbReference>
<dbReference type="PROSITE" id="PS50234">
    <property type="entry name" value="VWFA"/>
    <property type="match status" value="1"/>
</dbReference>
<sequence length="842" mass="93475">MEFPTKYVYITSNLDKPKEWFTQSEMSLTTTTDTIQKSFVNNSGSSSSSKGFGEAVLLDILDTAGQEEYSAMRDQYVRTGDCFMIVFSIDSRSSFEEVSQLKQHIERVKDRDDVPIIIVGNKVDLESRRQVSRIEADQLARSLRVPYIETSAKTRSNIEEAFFTLVRHTPRNTVYKVVVMGGGGVGKSAIIIQFIQNHFVEEYDPTIEDSYRKQVTISGLPPIGGSLNKKSSSSSSSSSSSSGKTGLFNKIFSGKDKQPSPQQAASPSTIDRTGQISTNRLEANVLSYSMSNLSKEVPLITGDCVYCQGCNVILSRFSNLVKTGDDSFTWKCEFCKYSNSNILLEQGEIPNKDSVEYVLSSPSTSSTTDGSKREESIIIYCIDVSGSMGITTEVPSLQSEWVNAKKGVKGASSGPSYISRLECVQSSIPTMIDRLSIQYPNKRVVLVTFSDEVMIYTQSNSVDGPIVIAGDKLEDFDQLIEIGRSMTYDKLPTASGSSDFLKAKIKSLEPVQSTALGPALLVSAAIASQKMLSEVVICTDGVPNVGLGAIEDLPLGPAQEFYEKVTKLAQNNKTTINIIGISGSHIDLGVIGKVSEQTNGNITIIHPLELAREIRKLTQNPMIATDVEMSICLHPTLEINKYDSKQGLSRVVKQFPNVNSLTDLTLLYSSRNRPTEFVQIYPFQIQIKYTKLDGVRCLRVVSAQLQATPDFNTSTSNANISILAMAFTQQAAKIAQQQEYMESRLHLKAATKLIRSLCNTDEQWEEFYNFEVLREEMEAPLITCIKNKQQRVEKAATDDEIQVFYKMKNVHKSFVEGGRKKDISRRKGEAEINKQYYNIKFT</sequence>
<feature type="chain" id="PRO_0000371347" description="Circularly permutated Ras protein 1">
    <location>
        <begin position="1"/>
        <end position="842"/>
    </location>
</feature>
<feature type="domain" description="VWFA" evidence="3">
    <location>
        <begin position="377"/>
        <end position="627"/>
    </location>
</feature>
<feature type="region of interest" description="Disordered" evidence="4">
    <location>
        <begin position="253"/>
        <end position="274"/>
    </location>
</feature>
<feature type="compositionally biased region" description="Polar residues" evidence="4">
    <location>
        <begin position="259"/>
        <end position="274"/>
    </location>
</feature>
<feature type="binding site" evidence="1">
    <location>
        <begin position="62"/>
        <end position="66"/>
    </location>
    <ligand>
        <name>GTP</name>
        <dbReference type="ChEBI" id="CHEBI:37565"/>
    </ligand>
</feature>
<feature type="binding site" evidence="1">
    <location>
        <begin position="121"/>
        <end position="124"/>
    </location>
    <ligand>
        <name>GTP</name>
        <dbReference type="ChEBI" id="CHEBI:37565"/>
    </ligand>
</feature>
<feature type="binding site" evidence="2">
    <location>
        <begin position="181"/>
        <end position="188"/>
    </location>
    <ligand>
        <name>GTP</name>
        <dbReference type="ChEBI" id="CHEBI:37565"/>
    </ligand>
</feature>
<proteinExistence type="inferred from homology"/>
<keyword id="KW-0342">GTP-binding</keyword>
<keyword id="KW-0547">Nucleotide-binding</keyword>
<keyword id="KW-1185">Reference proteome</keyword>
<gene>
    <name type="primary">cpras1</name>
    <name type="ORF">DDB_G0277381</name>
</gene>
<accession>Q75J93</accession>
<accession>Q54ZR3</accession>
<comment type="domain">
    <text>In contrast to other GTP-binding proteins, it is characterized by a circular permutation of the GTPase motifs described by a G4-G3-G1 pattern.</text>
</comment>
<comment type="similarity">
    <text evidence="5">Belongs to the small GTPase superfamily. CpRas family.</text>
</comment>
<organism>
    <name type="scientific">Dictyostelium discoideum</name>
    <name type="common">Social amoeba</name>
    <dbReference type="NCBI Taxonomy" id="44689"/>
    <lineage>
        <taxon>Eukaryota</taxon>
        <taxon>Amoebozoa</taxon>
        <taxon>Evosea</taxon>
        <taxon>Eumycetozoa</taxon>
        <taxon>Dictyostelia</taxon>
        <taxon>Dictyosteliales</taxon>
        <taxon>Dictyosteliaceae</taxon>
        <taxon>Dictyostelium</taxon>
    </lineage>
</organism>
<evidence type="ECO:0000250" key="1"/>
<evidence type="ECO:0000255" key="2"/>
<evidence type="ECO:0000255" key="3">
    <source>
        <dbReference type="PROSITE-ProRule" id="PRU00219"/>
    </source>
</evidence>
<evidence type="ECO:0000256" key="4">
    <source>
        <dbReference type="SAM" id="MobiDB-lite"/>
    </source>
</evidence>
<evidence type="ECO:0000305" key="5"/>
<name>CPAS1_DICDI</name>
<protein>
    <recommendedName>
        <fullName>Circularly permutated Ras protein 1</fullName>
        <shortName>DdiCPRas1</shortName>
    </recommendedName>
</protein>
<reference key="1">
    <citation type="journal article" date="2002" name="Nature">
        <title>Sequence and analysis of chromosome 2 of Dictyostelium discoideum.</title>
        <authorList>
            <person name="Gloeckner G."/>
            <person name="Eichinger L."/>
            <person name="Szafranski K."/>
            <person name="Pachebat J.A."/>
            <person name="Bankier A.T."/>
            <person name="Dear P.H."/>
            <person name="Lehmann R."/>
            <person name="Baumgart C."/>
            <person name="Parra G."/>
            <person name="Abril J.F."/>
            <person name="Guigo R."/>
            <person name="Kumpf K."/>
            <person name="Tunggal B."/>
            <person name="Cox E.C."/>
            <person name="Quail M.A."/>
            <person name="Platzer M."/>
            <person name="Rosenthal A."/>
            <person name="Noegel A.A."/>
        </authorList>
    </citation>
    <scope>NUCLEOTIDE SEQUENCE [LARGE SCALE GENOMIC DNA]</scope>
    <source>
        <strain>AX4</strain>
    </source>
</reference>
<reference key="2">
    <citation type="journal article" date="2005" name="Nature">
        <title>The genome of the social amoeba Dictyostelium discoideum.</title>
        <authorList>
            <person name="Eichinger L."/>
            <person name="Pachebat J.A."/>
            <person name="Gloeckner G."/>
            <person name="Rajandream M.A."/>
            <person name="Sucgang R."/>
            <person name="Berriman M."/>
            <person name="Song J."/>
            <person name="Olsen R."/>
            <person name="Szafranski K."/>
            <person name="Xu Q."/>
            <person name="Tunggal B."/>
            <person name="Kummerfeld S."/>
            <person name="Madera M."/>
            <person name="Konfortov B.A."/>
            <person name="Rivero F."/>
            <person name="Bankier A.T."/>
            <person name="Lehmann R."/>
            <person name="Hamlin N."/>
            <person name="Davies R."/>
            <person name="Gaudet P."/>
            <person name="Fey P."/>
            <person name="Pilcher K."/>
            <person name="Chen G."/>
            <person name="Saunders D."/>
            <person name="Sodergren E.J."/>
            <person name="Davis P."/>
            <person name="Kerhornou A."/>
            <person name="Nie X."/>
            <person name="Hall N."/>
            <person name="Anjard C."/>
            <person name="Hemphill L."/>
            <person name="Bason N."/>
            <person name="Farbrother P."/>
            <person name="Desany B."/>
            <person name="Just E."/>
            <person name="Morio T."/>
            <person name="Rost R."/>
            <person name="Churcher C.M."/>
            <person name="Cooper J."/>
            <person name="Haydock S."/>
            <person name="van Driessche N."/>
            <person name="Cronin A."/>
            <person name="Goodhead I."/>
            <person name="Muzny D.M."/>
            <person name="Mourier T."/>
            <person name="Pain A."/>
            <person name="Lu M."/>
            <person name="Harper D."/>
            <person name="Lindsay R."/>
            <person name="Hauser H."/>
            <person name="James K.D."/>
            <person name="Quiles M."/>
            <person name="Madan Babu M."/>
            <person name="Saito T."/>
            <person name="Buchrieser C."/>
            <person name="Wardroper A."/>
            <person name="Felder M."/>
            <person name="Thangavelu M."/>
            <person name="Johnson D."/>
            <person name="Knights A."/>
            <person name="Loulseged H."/>
            <person name="Mungall K.L."/>
            <person name="Oliver K."/>
            <person name="Price C."/>
            <person name="Quail M.A."/>
            <person name="Urushihara H."/>
            <person name="Hernandez J."/>
            <person name="Rabbinowitsch E."/>
            <person name="Steffen D."/>
            <person name="Sanders M."/>
            <person name="Ma J."/>
            <person name="Kohara Y."/>
            <person name="Sharp S."/>
            <person name="Simmonds M.N."/>
            <person name="Spiegler S."/>
            <person name="Tivey A."/>
            <person name="Sugano S."/>
            <person name="White B."/>
            <person name="Walker D."/>
            <person name="Woodward J.R."/>
            <person name="Winckler T."/>
            <person name="Tanaka Y."/>
            <person name="Shaulsky G."/>
            <person name="Schleicher M."/>
            <person name="Weinstock G.M."/>
            <person name="Rosenthal A."/>
            <person name="Cox E.C."/>
            <person name="Chisholm R.L."/>
            <person name="Gibbs R.A."/>
            <person name="Loomis W.F."/>
            <person name="Platzer M."/>
            <person name="Kay R.R."/>
            <person name="Williams J.G."/>
            <person name="Dear P.H."/>
            <person name="Noegel A.A."/>
            <person name="Barrell B.G."/>
            <person name="Kuspa A."/>
        </authorList>
    </citation>
    <scope>NUCLEOTIDE SEQUENCE [LARGE SCALE GENOMIC DNA]</scope>
    <source>
        <strain>AX4</strain>
    </source>
</reference>
<reference key="3">
    <citation type="journal article" date="2008" name="Biol. Direct">
        <title>cpRAS: a novel circularly permuted RAS-like GTPase domain with a highly scattered phylogenetic distribution.</title>
        <authorList>
            <person name="Elias M."/>
            <person name="Novotny M."/>
        </authorList>
    </citation>
    <scope>NOMENCLATURE</scope>
</reference>